<protein>
    <recommendedName>
        <fullName>ATP-dependent RNA helicase MRH4, mitochondrial</fullName>
        <ecNumber>3.6.4.13</ecNumber>
    </recommendedName>
</protein>
<accession>Q6FJJ8</accession>
<feature type="transit peptide" description="Mitochondrion" evidence="2">
    <location>
        <begin position="1"/>
        <end position="50"/>
    </location>
</feature>
<feature type="chain" id="PRO_0000232351" description="ATP-dependent RNA helicase MRH4, mitochondrial">
    <location>
        <begin position="51"/>
        <end position="568"/>
    </location>
</feature>
<feature type="domain" description="Helicase ATP-binding" evidence="3">
    <location>
        <begin position="160"/>
        <end position="348"/>
    </location>
</feature>
<feature type="domain" description="Helicase C-terminal" evidence="4">
    <location>
        <begin position="379"/>
        <end position="568"/>
    </location>
</feature>
<feature type="region of interest" description="Disordered" evidence="5">
    <location>
        <begin position="36"/>
        <end position="64"/>
    </location>
</feature>
<feature type="short sequence motif" description="Q motif">
    <location>
        <begin position="143"/>
        <end position="150"/>
    </location>
</feature>
<feature type="short sequence motif" description="DEAD box">
    <location>
        <begin position="296"/>
        <end position="299"/>
    </location>
</feature>
<feature type="compositionally biased region" description="Polar residues" evidence="5">
    <location>
        <begin position="36"/>
        <end position="49"/>
    </location>
</feature>
<feature type="binding site" evidence="3">
    <location>
        <begin position="173"/>
        <end position="180"/>
    </location>
    <ligand>
        <name>ATP</name>
        <dbReference type="ChEBI" id="CHEBI:30616"/>
    </ligand>
</feature>
<gene>
    <name type="primary">MRH4</name>
    <name type="ordered locus">CAGL0M05753g</name>
</gene>
<reference key="1">
    <citation type="journal article" date="2004" name="Nature">
        <title>Genome evolution in yeasts.</title>
        <authorList>
            <person name="Dujon B."/>
            <person name="Sherman D."/>
            <person name="Fischer G."/>
            <person name="Durrens P."/>
            <person name="Casaregola S."/>
            <person name="Lafontaine I."/>
            <person name="de Montigny J."/>
            <person name="Marck C."/>
            <person name="Neuveglise C."/>
            <person name="Talla E."/>
            <person name="Goffard N."/>
            <person name="Frangeul L."/>
            <person name="Aigle M."/>
            <person name="Anthouard V."/>
            <person name="Babour A."/>
            <person name="Barbe V."/>
            <person name="Barnay S."/>
            <person name="Blanchin S."/>
            <person name="Beckerich J.-M."/>
            <person name="Beyne E."/>
            <person name="Bleykasten C."/>
            <person name="Boisrame A."/>
            <person name="Boyer J."/>
            <person name="Cattolico L."/>
            <person name="Confanioleri F."/>
            <person name="de Daruvar A."/>
            <person name="Despons L."/>
            <person name="Fabre E."/>
            <person name="Fairhead C."/>
            <person name="Ferry-Dumazet H."/>
            <person name="Groppi A."/>
            <person name="Hantraye F."/>
            <person name="Hennequin C."/>
            <person name="Jauniaux N."/>
            <person name="Joyet P."/>
            <person name="Kachouri R."/>
            <person name="Kerrest A."/>
            <person name="Koszul R."/>
            <person name="Lemaire M."/>
            <person name="Lesur I."/>
            <person name="Ma L."/>
            <person name="Muller H."/>
            <person name="Nicaud J.-M."/>
            <person name="Nikolski M."/>
            <person name="Oztas S."/>
            <person name="Ozier-Kalogeropoulos O."/>
            <person name="Pellenz S."/>
            <person name="Potier S."/>
            <person name="Richard G.-F."/>
            <person name="Straub M.-L."/>
            <person name="Suleau A."/>
            <person name="Swennen D."/>
            <person name="Tekaia F."/>
            <person name="Wesolowski-Louvel M."/>
            <person name="Westhof E."/>
            <person name="Wirth B."/>
            <person name="Zeniou-Meyer M."/>
            <person name="Zivanovic Y."/>
            <person name="Bolotin-Fukuhara M."/>
            <person name="Thierry A."/>
            <person name="Bouchier C."/>
            <person name="Caudron B."/>
            <person name="Scarpelli C."/>
            <person name="Gaillardin C."/>
            <person name="Weissenbach J."/>
            <person name="Wincker P."/>
            <person name="Souciet J.-L."/>
        </authorList>
    </citation>
    <scope>NUCLEOTIDE SEQUENCE [LARGE SCALE GENOMIC DNA]</scope>
    <source>
        <strain>ATCC 2001 / BCRC 20586 / JCM 3761 / NBRC 0622 / NRRL Y-65 / CBS 138</strain>
    </source>
</reference>
<evidence type="ECO:0000250" key="1"/>
<evidence type="ECO:0000255" key="2"/>
<evidence type="ECO:0000255" key="3">
    <source>
        <dbReference type="PROSITE-ProRule" id="PRU00541"/>
    </source>
</evidence>
<evidence type="ECO:0000255" key="4">
    <source>
        <dbReference type="PROSITE-ProRule" id="PRU00542"/>
    </source>
</evidence>
<evidence type="ECO:0000256" key="5">
    <source>
        <dbReference type="SAM" id="MobiDB-lite"/>
    </source>
</evidence>
<evidence type="ECO:0000305" key="6"/>
<keyword id="KW-0067">ATP-binding</keyword>
<keyword id="KW-0347">Helicase</keyword>
<keyword id="KW-0378">Hydrolase</keyword>
<keyword id="KW-0496">Mitochondrion</keyword>
<keyword id="KW-0547">Nucleotide-binding</keyword>
<keyword id="KW-1185">Reference proteome</keyword>
<keyword id="KW-0694">RNA-binding</keyword>
<keyword id="KW-0809">Transit peptide</keyword>
<dbReference type="EC" id="3.6.4.13"/>
<dbReference type="EMBL" id="CR380959">
    <property type="protein sequence ID" value="CAG62572.1"/>
    <property type="molecule type" value="Genomic_DNA"/>
</dbReference>
<dbReference type="RefSeq" id="XP_449596.1">
    <property type="nucleotide sequence ID" value="XM_449596.1"/>
</dbReference>
<dbReference type="SMR" id="Q6FJJ8"/>
<dbReference type="FunCoup" id="Q6FJJ8">
    <property type="interactions" value="155"/>
</dbReference>
<dbReference type="STRING" id="284593.Q6FJJ8"/>
<dbReference type="EnsemblFungi" id="CAGL0M05753g-T">
    <property type="protein sequence ID" value="CAGL0M05753g-T-p1"/>
    <property type="gene ID" value="CAGL0M05753g"/>
</dbReference>
<dbReference type="KEGG" id="cgr:2891644"/>
<dbReference type="CGD" id="CAL0136825">
    <property type="gene designation" value="CAGL0M05753g"/>
</dbReference>
<dbReference type="VEuPathDB" id="FungiDB:B1J91_M05753g"/>
<dbReference type="VEuPathDB" id="FungiDB:CAGL0M05753g"/>
<dbReference type="eggNOG" id="KOG0335">
    <property type="taxonomic scope" value="Eukaryota"/>
</dbReference>
<dbReference type="HOGENOM" id="CLU_003041_18_0_1"/>
<dbReference type="InParanoid" id="Q6FJJ8"/>
<dbReference type="OMA" id="HSTIDFI"/>
<dbReference type="Proteomes" id="UP000002428">
    <property type="component" value="Chromosome M"/>
</dbReference>
<dbReference type="GO" id="GO:0005759">
    <property type="term" value="C:mitochondrial matrix"/>
    <property type="evidence" value="ECO:0007669"/>
    <property type="project" value="EnsemblFungi"/>
</dbReference>
<dbReference type="GO" id="GO:0005524">
    <property type="term" value="F:ATP binding"/>
    <property type="evidence" value="ECO:0007669"/>
    <property type="project" value="UniProtKB-KW"/>
</dbReference>
<dbReference type="GO" id="GO:0016887">
    <property type="term" value="F:ATP hydrolysis activity"/>
    <property type="evidence" value="ECO:0007669"/>
    <property type="project" value="RHEA"/>
</dbReference>
<dbReference type="GO" id="GO:1990400">
    <property type="term" value="F:mitochondrial ribosomal large subunit rRNA binding"/>
    <property type="evidence" value="ECO:0007669"/>
    <property type="project" value="EnsemblFungi"/>
</dbReference>
<dbReference type="GO" id="GO:0003724">
    <property type="term" value="F:RNA helicase activity"/>
    <property type="evidence" value="ECO:0007669"/>
    <property type="project" value="UniProtKB-EC"/>
</dbReference>
<dbReference type="GO" id="GO:1902775">
    <property type="term" value="P:mitochondrial large ribosomal subunit assembly"/>
    <property type="evidence" value="ECO:0007669"/>
    <property type="project" value="EnsemblFungi"/>
</dbReference>
<dbReference type="GO" id="GO:0016070">
    <property type="term" value="P:RNA metabolic process"/>
    <property type="evidence" value="ECO:0007669"/>
    <property type="project" value="EnsemblFungi"/>
</dbReference>
<dbReference type="CDD" id="cd17965">
    <property type="entry name" value="DEADc_MRH4"/>
    <property type="match status" value="1"/>
</dbReference>
<dbReference type="CDD" id="cd18787">
    <property type="entry name" value="SF2_C_DEAD"/>
    <property type="match status" value="1"/>
</dbReference>
<dbReference type="Gene3D" id="3.40.50.300">
    <property type="entry name" value="P-loop containing nucleotide triphosphate hydrolases"/>
    <property type="match status" value="2"/>
</dbReference>
<dbReference type="InterPro" id="IPR011545">
    <property type="entry name" value="DEAD/DEAH_box_helicase_dom"/>
</dbReference>
<dbReference type="InterPro" id="IPR014001">
    <property type="entry name" value="Helicase_ATP-bd"/>
</dbReference>
<dbReference type="InterPro" id="IPR001650">
    <property type="entry name" value="Helicase_C-like"/>
</dbReference>
<dbReference type="InterPro" id="IPR027417">
    <property type="entry name" value="P-loop_NTPase"/>
</dbReference>
<dbReference type="PANTHER" id="PTHR47960">
    <property type="entry name" value="DEAD-BOX ATP-DEPENDENT RNA HELICASE 50"/>
    <property type="match status" value="1"/>
</dbReference>
<dbReference type="Pfam" id="PF00270">
    <property type="entry name" value="DEAD"/>
    <property type="match status" value="1"/>
</dbReference>
<dbReference type="Pfam" id="PF00271">
    <property type="entry name" value="Helicase_C"/>
    <property type="match status" value="1"/>
</dbReference>
<dbReference type="SMART" id="SM00487">
    <property type="entry name" value="DEXDc"/>
    <property type="match status" value="1"/>
</dbReference>
<dbReference type="SMART" id="SM00490">
    <property type="entry name" value="HELICc"/>
    <property type="match status" value="1"/>
</dbReference>
<dbReference type="SUPFAM" id="SSF52540">
    <property type="entry name" value="P-loop containing nucleoside triphosphate hydrolases"/>
    <property type="match status" value="1"/>
</dbReference>
<dbReference type="PROSITE" id="PS51192">
    <property type="entry name" value="HELICASE_ATP_BIND_1"/>
    <property type="match status" value="1"/>
</dbReference>
<dbReference type="PROSITE" id="PS51194">
    <property type="entry name" value="HELICASE_CTER"/>
    <property type="match status" value="1"/>
</dbReference>
<name>MRH4_CANGA</name>
<proteinExistence type="inferred from homology"/>
<comment type="function">
    <text evidence="1">ATP-binding RNA helicase involved in mitochondrial RNA metabolism. Required for maintenance of mitochondrial DNA (By similarity).</text>
</comment>
<comment type="catalytic activity">
    <reaction>
        <text>ATP + H2O = ADP + phosphate + H(+)</text>
        <dbReference type="Rhea" id="RHEA:13065"/>
        <dbReference type="ChEBI" id="CHEBI:15377"/>
        <dbReference type="ChEBI" id="CHEBI:15378"/>
        <dbReference type="ChEBI" id="CHEBI:30616"/>
        <dbReference type="ChEBI" id="CHEBI:43474"/>
        <dbReference type="ChEBI" id="CHEBI:456216"/>
        <dbReference type="EC" id="3.6.4.13"/>
    </reaction>
</comment>
<comment type="subcellular location">
    <subcellularLocation>
        <location evidence="1">Mitochondrion</location>
    </subcellularLocation>
</comment>
<comment type="domain">
    <text>The Q motif is unique to and characteristic of the DEAD box family of RNA helicases and controls ATP binding and hydrolysis.</text>
</comment>
<comment type="similarity">
    <text evidence="6">Belongs to the DEAD box helicase family. MRH4 subfamily.</text>
</comment>
<organism>
    <name type="scientific">Candida glabrata (strain ATCC 2001 / BCRC 20586 / JCM 3761 / NBRC 0622 / NRRL Y-65 / CBS 138)</name>
    <name type="common">Yeast</name>
    <name type="synonym">Nakaseomyces glabratus</name>
    <dbReference type="NCBI Taxonomy" id="284593"/>
    <lineage>
        <taxon>Eukaryota</taxon>
        <taxon>Fungi</taxon>
        <taxon>Dikarya</taxon>
        <taxon>Ascomycota</taxon>
        <taxon>Saccharomycotina</taxon>
        <taxon>Saccharomycetes</taxon>
        <taxon>Saccharomycetales</taxon>
        <taxon>Saccharomycetaceae</taxon>
        <taxon>Nakaseomyces</taxon>
    </lineage>
</organism>
<sequence length="568" mass="63924">MVSILAIRTFNPLGHFVSTQCVRAYAINSVRAGSKSSSVRAGSKNDTTRASSKKNKAGKSKLQLSARFKQNANKSQKADKFKSQKQFKYGLYGGLKENENKFLETNANLVEKITEFEELKLLPEVRKHVINLIKKDSLNTTEEIHPSPIQTIAIKRLSKNLMEPKLQVHAIAAETGSGKTMAYCAPLLDYLKRQEIETPEKWESIKDKAIIRSVILVPTLELVDQIYTTLTCIPDTLGIHVHKWTTGVDYQQLLENLKSRTDILITTPSKLLSLQRVRMISRADLILKRIEFVVLDEADTLLDKSWLEDTHKALKAMSDVNHLVLCSATIPNEFDRTMTKMFPNAIPLTTPRLHKLPKGINFRIINAAVSPYKGSKIKALAQTLYAIAYDGTDPGFEKRCIVFINEKKNVDNVVQKLRNEYGHDVVGLTGDMEGRTRLELIRPFISPPEKLTEQEKQIDKDLNDQETVNISGSNISIGNIENSNKASNFIPKLRVLVTTDLLARGLNFKGVRNVILYDVPITAIDLVHRAGRTARMRQSGRVFMIIDKKTQSWAKAVPTILKKNKALT</sequence>